<dbReference type="EMBL" id="CP001096">
    <property type="protein sequence ID" value="ACF02161.1"/>
    <property type="molecule type" value="Genomic_DNA"/>
</dbReference>
<dbReference type="RefSeq" id="WP_012496649.1">
    <property type="nucleotide sequence ID" value="NC_011004.1"/>
</dbReference>
<dbReference type="SMR" id="B3QBX4"/>
<dbReference type="KEGG" id="rpt:Rpal_3661"/>
<dbReference type="HOGENOM" id="CLU_058591_0_2_5"/>
<dbReference type="OrthoDB" id="9806396at2"/>
<dbReference type="Proteomes" id="UP000001725">
    <property type="component" value="Chromosome"/>
</dbReference>
<dbReference type="GO" id="GO:0022627">
    <property type="term" value="C:cytosolic small ribosomal subunit"/>
    <property type="evidence" value="ECO:0007669"/>
    <property type="project" value="TreeGrafter"/>
</dbReference>
<dbReference type="GO" id="GO:0003729">
    <property type="term" value="F:mRNA binding"/>
    <property type="evidence" value="ECO:0007669"/>
    <property type="project" value="UniProtKB-UniRule"/>
</dbReference>
<dbReference type="GO" id="GO:0019843">
    <property type="term" value="F:rRNA binding"/>
    <property type="evidence" value="ECO:0007669"/>
    <property type="project" value="UniProtKB-UniRule"/>
</dbReference>
<dbReference type="GO" id="GO:0003735">
    <property type="term" value="F:structural constituent of ribosome"/>
    <property type="evidence" value="ECO:0007669"/>
    <property type="project" value="InterPro"/>
</dbReference>
<dbReference type="GO" id="GO:0006412">
    <property type="term" value="P:translation"/>
    <property type="evidence" value="ECO:0007669"/>
    <property type="project" value="UniProtKB-UniRule"/>
</dbReference>
<dbReference type="CDD" id="cd02412">
    <property type="entry name" value="KH-II_30S_S3"/>
    <property type="match status" value="1"/>
</dbReference>
<dbReference type="FunFam" id="3.30.1140.32:FF:000009">
    <property type="entry name" value="30S ribosomal protein S3"/>
    <property type="match status" value="1"/>
</dbReference>
<dbReference type="FunFam" id="3.30.300.20:FF:000001">
    <property type="entry name" value="30S ribosomal protein S3"/>
    <property type="match status" value="1"/>
</dbReference>
<dbReference type="Gene3D" id="3.30.300.20">
    <property type="match status" value="1"/>
</dbReference>
<dbReference type="Gene3D" id="3.30.1140.32">
    <property type="entry name" value="Ribosomal protein S3, C-terminal domain"/>
    <property type="match status" value="1"/>
</dbReference>
<dbReference type="HAMAP" id="MF_01309_B">
    <property type="entry name" value="Ribosomal_uS3_B"/>
    <property type="match status" value="1"/>
</dbReference>
<dbReference type="InterPro" id="IPR004087">
    <property type="entry name" value="KH_dom"/>
</dbReference>
<dbReference type="InterPro" id="IPR015946">
    <property type="entry name" value="KH_dom-like_a/b"/>
</dbReference>
<dbReference type="InterPro" id="IPR004044">
    <property type="entry name" value="KH_dom_type_2"/>
</dbReference>
<dbReference type="InterPro" id="IPR009019">
    <property type="entry name" value="KH_sf_prok-type"/>
</dbReference>
<dbReference type="InterPro" id="IPR036419">
    <property type="entry name" value="Ribosomal_S3_C_sf"/>
</dbReference>
<dbReference type="InterPro" id="IPR005704">
    <property type="entry name" value="Ribosomal_uS3_bac-typ"/>
</dbReference>
<dbReference type="InterPro" id="IPR001351">
    <property type="entry name" value="Ribosomal_uS3_C"/>
</dbReference>
<dbReference type="InterPro" id="IPR018280">
    <property type="entry name" value="Ribosomal_uS3_CS"/>
</dbReference>
<dbReference type="NCBIfam" id="TIGR01009">
    <property type="entry name" value="rpsC_bact"/>
    <property type="match status" value="1"/>
</dbReference>
<dbReference type="PANTHER" id="PTHR11760">
    <property type="entry name" value="30S/40S RIBOSOMAL PROTEIN S3"/>
    <property type="match status" value="1"/>
</dbReference>
<dbReference type="PANTHER" id="PTHR11760:SF19">
    <property type="entry name" value="SMALL RIBOSOMAL SUBUNIT PROTEIN US3C"/>
    <property type="match status" value="1"/>
</dbReference>
<dbReference type="Pfam" id="PF07650">
    <property type="entry name" value="KH_2"/>
    <property type="match status" value="1"/>
</dbReference>
<dbReference type="Pfam" id="PF00189">
    <property type="entry name" value="Ribosomal_S3_C"/>
    <property type="match status" value="1"/>
</dbReference>
<dbReference type="SMART" id="SM00322">
    <property type="entry name" value="KH"/>
    <property type="match status" value="1"/>
</dbReference>
<dbReference type="SUPFAM" id="SSF54814">
    <property type="entry name" value="Prokaryotic type KH domain (KH-domain type II)"/>
    <property type="match status" value="1"/>
</dbReference>
<dbReference type="SUPFAM" id="SSF54821">
    <property type="entry name" value="Ribosomal protein S3 C-terminal domain"/>
    <property type="match status" value="1"/>
</dbReference>
<dbReference type="PROSITE" id="PS50823">
    <property type="entry name" value="KH_TYPE_2"/>
    <property type="match status" value="1"/>
</dbReference>
<dbReference type="PROSITE" id="PS00548">
    <property type="entry name" value="RIBOSOMAL_S3"/>
    <property type="match status" value="1"/>
</dbReference>
<organism>
    <name type="scientific">Rhodopseudomonas palustris (strain TIE-1)</name>
    <dbReference type="NCBI Taxonomy" id="395960"/>
    <lineage>
        <taxon>Bacteria</taxon>
        <taxon>Pseudomonadati</taxon>
        <taxon>Pseudomonadota</taxon>
        <taxon>Alphaproteobacteria</taxon>
        <taxon>Hyphomicrobiales</taxon>
        <taxon>Nitrobacteraceae</taxon>
        <taxon>Rhodopseudomonas</taxon>
    </lineage>
</organism>
<proteinExistence type="inferred from homology"/>
<reference key="1">
    <citation type="submission" date="2008-05" db="EMBL/GenBank/DDBJ databases">
        <title>Complete sequence of Rhodopseudomonas palustris TIE-1.</title>
        <authorList>
            <consortium name="US DOE Joint Genome Institute"/>
            <person name="Lucas S."/>
            <person name="Copeland A."/>
            <person name="Lapidus A."/>
            <person name="Glavina del Rio T."/>
            <person name="Dalin E."/>
            <person name="Tice H."/>
            <person name="Pitluck S."/>
            <person name="Chain P."/>
            <person name="Malfatti S."/>
            <person name="Shin M."/>
            <person name="Vergez L."/>
            <person name="Lang D."/>
            <person name="Schmutz J."/>
            <person name="Larimer F."/>
            <person name="Land M."/>
            <person name="Hauser L."/>
            <person name="Kyrpides N."/>
            <person name="Mikhailova N."/>
            <person name="Emerson D."/>
            <person name="Newman D.K."/>
            <person name="Roden E."/>
            <person name="Richardson P."/>
        </authorList>
    </citation>
    <scope>NUCLEOTIDE SEQUENCE [LARGE SCALE GENOMIC DNA]</scope>
    <source>
        <strain>TIE-1</strain>
    </source>
</reference>
<sequence>MGQKINPIGLRLGINRTWDSRWFAGKNEYGKLLHEDVKIREILHKELKQAAVARIVIERPHKKCRVTIHSARPGVVIGKKGADIDKLRKKVADITSSDVVINIVEIRKPELDATLVAESIAQQLERRVAFRRAMKRAVQSAMRLGAEGIRINCSGRLGGAEIARMEWYREGRVPLHTLRADIDYGVATAFTTFGTCGVKVWIFKGEILEHDPMAQDKRMAESDGGGSSRPRRDAA</sequence>
<feature type="chain" id="PRO_1000141009" description="Small ribosomal subunit protein uS3">
    <location>
        <begin position="1"/>
        <end position="235"/>
    </location>
</feature>
<feature type="domain" description="KH type-2" evidence="1">
    <location>
        <begin position="39"/>
        <end position="107"/>
    </location>
</feature>
<feature type="region of interest" description="Disordered" evidence="2">
    <location>
        <begin position="215"/>
        <end position="235"/>
    </location>
</feature>
<name>RS3_RHOPT</name>
<gene>
    <name evidence="1" type="primary">rpsC</name>
    <name type="ordered locus">Rpal_3661</name>
</gene>
<keyword id="KW-0687">Ribonucleoprotein</keyword>
<keyword id="KW-0689">Ribosomal protein</keyword>
<keyword id="KW-0694">RNA-binding</keyword>
<keyword id="KW-0699">rRNA-binding</keyword>
<protein>
    <recommendedName>
        <fullName evidence="1">Small ribosomal subunit protein uS3</fullName>
    </recommendedName>
    <alternativeName>
        <fullName evidence="3">30S ribosomal protein S3</fullName>
    </alternativeName>
</protein>
<comment type="function">
    <text evidence="1">Binds the lower part of the 30S subunit head. Binds mRNA in the 70S ribosome, positioning it for translation.</text>
</comment>
<comment type="subunit">
    <text evidence="1">Part of the 30S ribosomal subunit. Forms a tight complex with proteins S10 and S14.</text>
</comment>
<comment type="similarity">
    <text evidence="1">Belongs to the universal ribosomal protein uS3 family.</text>
</comment>
<evidence type="ECO:0000255" key="1">
    <source>
        <dbReference type="HAMAP-Rule" id="MF_01309"/>
    </source>
</evidence>
<evidence type="ECO:0000256" key="2">
    <source>
        <dbReference type="SAM" id="MobiDB-lite"/>
    </source>
</evidence>
<evidence type="ECO:0000305" key="3"/>
<accession>B3QBX4</accession>